<dbReference type="EC" id="4.2.1.1"/>
<dbReference type="EMBL" id="AC005990">
    <property type="protein sequence ID" value="AAC98028.1"/>
    <property type="molecule type" value="Genomic_DNA"/>
</dbReference>
<dbReference type="EMBL" id="CP002684">
    <property type="protein sequence ID" value="AEE30426.1"/>
    <property type="molecule type" value="Genomic_DNA"/>
</dbReference>
<dbReference type="EMBL" id="CP002684">
    <property type="protein sequence ID" value="ANM59400.1"/>
    <property type="molecule type" value="Genomic_DNA"/>
</dbReference>
<dbReference type="EMBL" id="AY081265">
    <property type="protein sequence ID" value="AAL91154.1"/>
    <property type="molecule type" value="mRNA"/>
</dbReference>
<dbReference type="EMBL" id="AY114551">
    <property type="protein sequence ID" value="AAM47870.1"/>
    <property type="molecule type" value="mRNA"/>
</dbReference>
<dbReference type="PIR" id="D86371">
    <property type="entry name" value="D86371"/>
</dbReference>
<dbReference type="RefSeq" id="NP_001321762.1">
    <property type="nucleotide sequence ID" value="NM_001332620.1"/>
</dbReference>
<dbReference type="RefSeq" id="NP_173785.1">
    <property type="nucleotide sequence ID" value="NM_102221.5"/>
</dbReference>
<dbReference type="SMR" id="Q9ZUC2"/>
<dbReference type="BioGRID" id="24221">
    <property type="interactions" value="4"/>
</dbReference>
<dbReference type="FunCoup" id="Q9ZUC2">
    <property type="interactions" value="668"/>
</dbReference>
<dbReference type="IntAct" id="Q9ZUC2">
    <property type="interactions" value="4"/>
</dbReference>
<dbReference type="STRING" id="3702.Q9ZUC2"/>
<dbReference type="iPTMnet" id="Q9ZUC2"/>
<dbReference type="PaxDb" id="3702-AT1G23730.1"/>
<dbReference type="ProteomicsDB" id="240749"/>
<dbReference type="EnsemblPlants" id="AT1G23730.1">
    <property type="protein sequence ID" value="AT1G23730.1"/>
    <property type="gene ID" value="AT1G23730"/>
</dbReference>
<dbReference type="EnsemblPlants" id="AT1G23730.2">
    <property type="protein sequence ID" value="AT1G23730.2"/>
    <property type="gene ID" value="AT1G23730"/>
</dbReference>
<dbReference type="GeneID" id="838983"/>
<dbReference type="Gramene" id="AT1G23730.1">
    <property type="protein sequence ID" value="AT1G23730.1"/>
    <property type="gene ID" value="AT1G23730"/>
</dbReference>
<dbReference type="Gramene" id="AT1G23730.2">
    <property type="protein sequence ID" value="AT1G23730.2"/>
    <property type="gene ID" value="AT1G23730"/>
</dbReference>
<dbReference type="KEGG" id="ath:AT1G23730"/>
<dbReference type="Araport" id="AT1G23730"/>
<dbReference type="TAIR" id="AT1G23730">
    <property type="gene designation" value="BCA3"/>
</dbReference>
<dbReference type="eggNOG" id="KOG1578">
    <property type="taxonomic scope" value="Eukaryota"/>
</dbReference>
<dbReference type="HOGENOM" id="CLU_053879_5_0_1"/>
<dbReference type="InParanoid" id="Q9ZUC2"/>
<dbReference type="OMA" id="TNNYEKN"/>
<dbReference type="PhylomeDB" id="Q9ZUC2"/>
<dbReference type="BioCyc" id="ARA:AT1G23730-MONOMER"/>
<dbReference type="PRO" id="PR:Q9ZUC2"/>
<dbReference type="Proteomes" id="UP000006548">
    <property type="component" value="Chromosome 1"/>
</dbReference>
<dbReference type="ExpressionAtlas" id="Q9ZUC2">
    <property type="expression patterns" value="baseline and differential"/>
</dbReference>
<dbReference type="GO" id="GO:0005829">
    <property type="term" value="C:cytosol"/>
    <property type="evidence" value="ECO:0000314"/>
    <property type="project" value="TAIR"/>
</dbReference>
<dbReference type="GO" id="GO:0004089">
    <property type="term" value="F:carbonate dehydratase activity"/>
    <property type="evidence" value="ECO:0007669"/>
    <property type="project" value="UniProtKB-EC"/>
</dbReference>
<dbReference type="GO" id="GO:0008270">
    <property type="term" value="F:zinc ion binding"/>
    <property type="evidence" value="ECO:0007669"/>
    <property type="project" value="InterPro"/>
</dbReference>
<dbReference type="GO" id="GO:0015976">
    <property type="term" value="P:carbon utilization"/>
    <property type="evidence" value="ECO:0007669"/>
    <property type="project" value="InterPro"/>
</dbReference>
<dbReference type="CDD" id="cd00884">
    <property type="entry name" value="beta_CA_cladeB"/>
    <property type="match status" value="1"/>
</dbReference>
<dbReference type="FunFam" id="3.40.1050.10:FF:000002">
    <property type="entry name" value="Carbonic anhydrase"/>
    <property type="match status" value="1"/>
</dbReference>
<dbReference type="Gene3D" id="3.40.1050.10">
    <property type="entry name" value="Carbonic anhydrase"/>
    <property type="match status" value="1"/>
</dbReference>
<dbReference type="InterPro" id="IPR045066">
    <property type="entry name" value="Beta_CA_cladeB"/>
</dbReference>
<dbReference type="InterPro" id="IPR001765">
    <property type="entry name" value="Carbonic_anhydrase"/>
</dbReference>
<dbReference type="InterPro" id="IPR015892">
    <property type="entry name" value="Carbonic_anhydrase_CS"/>
</dbReference>
<dbReference type="InterPro" id="IPR036874">
    <property type="entry name" value="Carbonic_anhydrase_sf"/>
</dbReference>
<dbReference type="PANTHER" id="PTHR11002:SF52">
    <property type="entry name" value="BETA CARBONIC ANHYDRASE 3"/>
    <property type="match status" value="1"/>
</dbReference>
<dbReference type="PANTHER" id="PTHR11002">
    <property type="entry name" value="CARBONIC ANHYDRASE"/>
    <property type="match status" value="1"/>
</dbReference>
<dbReference type="Pfam" id="PF00484">
    <property type="entry name" value="Pro_CA"/>
    <property type="match status" value="1"/>
</dbReference>
<dbReference type="SMART" id="SM00947">
    <property type="entry name" value="Pro_CA"/>
    <property type="match status" value="1"/>
</dbReference>
<dbReference type="SUPFAM" id="SSF53056">
    <property type="entry name" value="beta-carbonic anhydrase, cab"/>
    <property type="match status" value="1"/>
</dbReference>
<dbReference type="PROSITE" id="PS00704">
    <property type="entry name" value="PROK_CO2_ANHYDRASE_1"/>
    <property type="match status" value="1"/>
</dbReference>
<reference key="1">
    <citation type="journal article" date="2000" name="Nature">
        <title>Sequence and analysis of chromosome 1 of the plant Arabidopsis thaliana.</title>
        <authorList>
            <person name="Theologis A."/>
            <person name="Ecker J.R."/>
            <person name="Palm C.J."/>
            <person name="Federspiel N.A."/>
            <person name="Kaul S."/>
            <person name="White O."/>
            <person name="Alonso J."/>
            <person name="Altafi H."/>
            <person name="Araujo R."/>
            <person name="Bowman C.L."/>
            <person name="Brooks S.Y."/>
            <person name="Buehler E."/>
            <person name="Chan A."/>
            <person name="Chao Q."/>
            <person name="Chen H."/>
            <person name="Cheuk R.F."/>
            <person name="Chin C.W."/>
            <person name="Chung M.K."/>
            <person name="Conn L."/>
            <person name="Conway A.B."/>
            <person name="Conway A.R."/>
            <person name="Creasy T.H."/>
            <person name="Dewar K."/>
            <person name="Dunn P."/>
            <person name="Etgu P."/>
            <person name="Feldblyum T.V."/>
            <person name="Feng J.-D."/>
            <person name="Fong B."/>
            <person name="Fujii C.Y."/>
            <person name="Gill J.E."/>
            <person name="Goldsmith A.D."/>
            <person name="Haas B."/>
            <person name="Hansen N.F."/>
            <person name="Hughes B."/>
            <person name="Huizar L."/>
            <person name="Hunter J.L."/>
            <person name="Jenkins J."/>
            <person name="Johnson-Hopson C."/>
            <person name="Khan S."/>
            <person name="Khaykin E."/>
            <person name="Kim C.J."/>
            <person name="Koo H.L."/>
            <person name="Kremenetskaia I."/>
            <person name="Kurtz D.B."/>
            <person name="Kwan A."/>
            <person name="Lam B."/>
            <person name="Langin-Hooper S."/>
            <person name="Lee A."/>
            <person name="Lee J.M."/>
            <person name="Lenz C.A."/>
            <person name="Li J.H."/>
            <person name="Li Y.-P."/>
            <person name="Lin X."/>
            <person name="Liu S.X."/>
            <person name="Liu Z.A."/>
            <person name="Luros J.S."/>
            <person name="Maiti R."/>
            <person name="Marziali A."/>
            <person name="Militscher J."/>
            <person name="Miranda M."/>
            <person name="Nguyen M."/>
            <person name="Nierman W.C."/>
            <person name="Osborne B.I."/>
            <person name="Pai G."/>
            <person name="Peterson J."/>
            <person name="Pham P.K."/>
            <person name="Rizzo M."/>
            <person name="Rooney T."/>
            <person name="Rowley D."/>
            <person name="Sakano H."/>
            <person name="Salzberg S.L."/>
            <person name="Schwartz J.R."/>
            <person name="Shinn P."/>
            <person name="Southwick A.M."/>
            <person name="Sun H."/>
            <person name="Tallon L.J."/>
            <person name="Tambunga G."/>
            <person name="Toriumi M.J."/>
            <person name="Town C.D."/>
            <person name="Utterback T."/>
            <person name="Van Aken S."/>
            <person name="Vaysberg M."/>
            <person name="Vysotskaia V.S."/>
            <person name="Walker M."/>
            <person name="Wu D."/>
            <person name="Yu G."/>
            <person name="Fraser C.M."/>
            <person name="Venter J.C."/>
            <person name="Davis R.W."/>
        </authorList>
    </citation>
    <scope>NUCLEOTIDE SEQUENCE [LARGE SCALE GENOMIC DNA]</scope>
    <source>
        <strain>cv. Columbia</strain>
    </source>
</reference>
<reference key="2">
    <citation type="journal article" date="2017" name="Plant J.">
        <title>Araport11: a complete reannotation of the Arabidopsis thaliana reference genome.</title>
        <authorList>
            <person name="Cheng C.Y."/>
            <person name="Krishnakumar V."/>
            <person name="Chan A.P."/>
            <person name="Thibaud-Nissen F."/>
            <person name="Schobel S."/>
            <person name="Town C.D."/>
        </authorList>
    </citation>
    <scope>GENOME REANNOTATION</scope>
    <source>
        <strain>cv. Columbia</strain>
    </source>
</reference>
<reference key="3">
    <citation type="journal article" date="2003" name="Science">
        <title>Empirical analysis of transcriptional activity in the Arabidopsis genome.</title>
        <authorList>
            <person name="Yamada K."/>
            <person name="Lim J."/>
            <person name="Dale J.M."/>
            <person name="Chen H."/>
            <person name="Shinn P."/>
            <person name="Palm C.J."/>
            <person name="Southwick A.M."/>
            <person name="Wu H.C."/>
            <person name="Kim C.J."/>
            <person name="Nguyen M."/>
            <person name="Pham P.K."/>
            <person name="Cheuk R.F."/>
            <person name="Karlin-Newmann G."/>
            <person name="Liu S.X."/>
            <person name="Lam B."/>
            <person name="Sakano H."/>
            <person name="Wu T."/>
            <person name="Yu G."/>
            <person name="Miranda M."/>
            <person name="Quach H.L."/>
            <person name="Tripp M."/>
            <person name="Chang C.H."/>
            <person name="Lee J.M."/>
            <person name="Toriumi M.J."/>
            <person name="Chan M.M."/>
            <person name="Tang C.C."/>
            <person name="Onodera C.S."/>
            <person name="Deng J.M."/>
            <person name="Akiyama K."/>
            <person name="Ansari Y."/>
            <person name="Arakawa T."/>
            <person name="Banh J."/>
            <person name="Banno F."/>
            <person name="Bowser L."/>
            <person name="Brooks S.Y."/>
            <person name="Carninci P."/>
            <person name="Chao Q."/>
            <person name="Choy N."/>
            <person name="Enju A."/>
            <person name="Goldsmith A.D."/>
            <person name="Gurjal M."/>
            <person name="Hansen N.F."/>
            <person name="Hayashizaki Y."/>
            <person name="Johnson-Hopson C."/>
            <person name="Hsuan V.W."/>
            <person name="Iida K."/>
            <person name="Karnes M."/>
            <person name="Khan S."/>
            <person name="Koesema E."/>
            <person name="Ishida J."/>
            <person name="Jiang P.X."/>
            <person name="Jones T."/>
            <person name="Kawai J."/>
            <person name="Kamiya A."/>
            <person name="Meyers C."/>
            <person name="Nakajima M."/>
            <person name="Narusaka M."/>
            <person name="Seki M."/>
            <person name="Sakurai T."/>
            <person name="Satou M."/>
            <person name="Tamse R."/>
            <person name="Vaysberg M."/>
            <person name="Wallender E.K."/>
            <person name="Wong C."/>
            <person name="Yamamura Y."/>
            <person name="Yuan S."/>
            <person name="Shinozaki K."/>
            <person name="Davis R.W."/>
            <person name="Theologis A."/>
            <person name="Ecker J.R."/>
        </authorList>
    </citation>
    <scope>NUCLEOTIDE SEQUENCE [LARGE SCALE MRNA]</scope>
    <source>
        <strain>cv. Columbia</strain>
    </source>
</reference>
<reference key="4">
    <citation type="journal article" date="2007" name="Plant Cell Environ.">
        <title>Characterization and expression analysis of genes encoding alpha and beta carbonic anhydrases in Arabidopsis.</title>
        <authorList>
            <person name="Fabre N."/>
            <person name="Reiter I.M."/>
            <person name="Becuwe-Linka N."/>
            <person name="Genty B."/>
            <person name="Rumeau D."/>
        </authorList>
    </citation>
    <scope>TISSUE SPECIFICITY</scope>
    <scope>SUBCELLULAR LOCATION</scope>
    <scope>GENE FAMILY</scope>
    <scope>NOMENCLATURE</scope>
    <source>
        <strain>cv. Columbia</strain>
    </source>
</reference>
<keyword id="KW-0175">Coiled coil</keyword>
<keyword id="KW-0963">Cytoplasm</keyword>
<keyword id="KW-0456">Lyase</keyword>
<keyword id="KW-0597">Phosphoprotein</keyword>
<keyword id="KW-1185">Reference proteome</keyword>
<keyword id="KW-0702">S-nitrosylation</keyword>
<keyword id="KW-0732">Signal</keyword>
<keyword id="KW-0862">Zinc</keyword>
<proteinExistence type="evidence at transcript level"/>
<evidence type="ECO:0000250" key="1"/>
<evidence type="ECO:0000250" key="2">
    <source>
        <dbReference type="UniProtKB" id="P27140"/>
    </source>
</evidence>
<evidence type="ECO:0000250" key="3">
    <source>
        <dbReference type="UniProtKB" id="P42737"/>
    </source>
</evidence>
<evidence type="ECO:0000255" key="4"/>
<evidence type="ECO:0000269" key="5">
    <source>
    </source>
</evidence>
<evidence type="ECO:0000305" key="6"/>
<feature type="signal peptide" evidence="4">
    <location>
        <begin position="1"/>
        <end position="28"/>
    </location>
</feature>
<feature type="chain" id="PRO_0000429735" description="Beta carbonic anhydrase 3">
    <location>
        <begin position="29"/>
        <end position="258"/>
    </location>
</feature>
<feature type="coiled-coil region" evidence="4">
    <location>
        <begin position="24"/>
        <end position="54"/>
    </location>
</feature>
<feature type="modified residue" description="Phosphothreonine" evidence="3">
    <location>
        <position position="35"/>
    </location>
</feature>
<feature type="modified residue" description="Phosphoserine" evidence="3">
    <location>
        <position position="95"/>
    </location>
</feature>
<feature type="modified residue" description="S-nitrosocysteine" evidence="2">
    <location>
        <position position="201"/>
    </location>
</feature>
<organism>
    <name type="scientific">Arabidopsis thaliana</name>
    <name type="common">Mouse-ear cress</name>
    <dbReference type="NCBI Taxonomy" id="3702"/>
    <lineage>
        <taxon>Eukaryota</taxon>
        <taxon>Viridiplantae</taxon>
        <taxon>Streptophyta</taxon>
        <taxon>Embryophyta</taxon>
        <taxon>Tracheophyta</taxon>
        <taxon>Spermatophyta</taxon>
        <taxon>Magnoliopsida</taxon>
        <taxon>eudicotyledons</taxon>
        <taxon>Gunneridae</taxon>
        <taxon>Pentapetalae</taxon>
        <taxon>rosids</taxon>
        <taxon>malvids</taxon>
        <taxon>Brassicales</taxon>
        <taxon>Brassicaceae</taxon>
        <taxon>Camelineae</taxon>
        <taxon>Arabidopsis</taxon>
    </lineage>
</organism>
<sequence length="258" mass="28829">MSTESYEDAIKRLGELLSKKSDLGNVAAAKIKKLTDELEELDSNKLDAVERIKSGFLHFKTNNYEKNPTLYNSLAKSQTPKFLVFACADSRVSPSHILNFQLGEAFIVRNIANMVPPYDKTKHSNVGAALEYPITVLNVENILVIGHSCCGGIKGLMAIEDNTAPTKTEFIENWIQICAPAKNRIKQDCKDLSFEDQCTNCEKEAVNVSLGNLLSYPFVRERVVKNKLAIRGAHYDFVKGTFDLWELDFKTTPAFALS</sequence>
<name>BCA3_ARATH</name>
<protein>
    <recommendedName>
        <fullName>Beta carbonic anhydrase 3</fullName>
        <shortName>AtbCA3</shortName>
        <shortName>AtbetaCA3</shortName>
        <ecNumber>4.2.1.1</ecNumber>
    </recommendedName>
    <alternativeName>
        <fullName>Beta carbonate dehydratase 3</fullName>
    </alternativeName>
</protein>
<accession>Q9ZUC2</accession>
<comment type="function">
    <text evidence="1">Reversible hydration of carbon dioxide.</text>
</comment>
<comment type="catalytic activity">
    <reaction>
        <text>hydrogencarbonate + H(+) = CO2 + H2O</text>
        <dbReference type="Rhea" id="RHEA:10748"/>
        <dbReference type="ChEBI" id="CHEBI:15377"/>
        <dbReference type="ChEBI" id="CHEBI:15378"/>
        <dbReference type="ChEBI" id="CHEBI:16526"/>
        <dbReference type="ChEBI" id="CHEBI:17544"/>
        <dbReference type="EC" id="4.2.1.1"/>
    </reaction>
</comment>
<comment type="subcellular location">
    <subcellularLocation>
        <location evidence="5">Cytoplasm</location>
        <location evidence="5">Cytosol</location>
    </subcellularLocation>
</comment>
<comment type="tissue specificity">
    <text evidence="5">Strongly expressed in aerial tissues including leaves, stems, flowers and siliques, and, to a lower extent, in roots.</text>
</comment>
<comment type="similarity">
    <text evidence="6">Belongs to the beta-class carbonic anhydrase family.</text>
</comment>
<gene>
    <name type="primary">BCA3</name>
    <name type="ordered locus">At1g23730</name>
    <name type="ORF">F5O8.28</name>
</gene>